<evidence type="ECO:0000255" key="1">
    <source>
        <dbReference type="HAMAP-Rule" id="MF_04132"/>
    </source>
</evidence>
<evidence type="ECO:0000269" key="2">
    <source>
    </source>
</evidence>
<evidence type="ECO:0000303" key="3">
    <source>
    </source>
</evidence>
<proteinExistence type="evidence at transcript level"/>
<feature type="chain" id="PRO_0000368137" description="Outer capsid protein VP4" evidence="1">
    <location>
        <begin position="1"/>
        <end position="776"/>
    </location>
</feature>
<feature type="chain" id="PRO_0000368138" description="Outer capsid protein VP8*" evidence="1">
    <location>
        <begin position="1"/>
        <end position="231"/>
    </location>
</feature>
<feature type="chain" id="PRO_0000368139" description="Outer capsid protein VP5*" evidence="1">
    <location>
        <begin position="248"/>
        <end position="776"/>
    </location>
</feature>
<feature type="region of interest" description="Spike head" evidence="1">
    <location>
        <begin position="65"/>
        <end position="224"/>
    </location>
</feature>
<feature type="region of interest" description="Spike body and stalk (antigen domain)" evidence="1">
    <location>
        <begin position="248"/>
        <end position="479"/>
    </location>
</feature>
<feature type="region of interest" description="Hydrophobic; possible role in virus entry into host cell" evidence="1">
    <location>
        <begin position="389"/>
        <end position="409"/>
    </location>
</feature>
<feature type="region of interest" description="Spike foot" evidence="1">
    <location>
        <begin position="510"/>
        <end position="776"/>
    </location>
</feature>
<feature type="coiled-coil region" evidence="1">
    <location>
        <begin position="484"/>
        <end position="511"/>
    </location>
</feature>
<feature type="short sequence motif" description="DGE motif; interaction with ITGA2/ITGB1 heterodimer" evidence="1">
    <location>
        <begin position="308"/>
        <end position="310"/>
    </location>
</feature>
<feature type="short sequence motif" description="YGL motif; interaction with ITGA4" evidence="1">
    <location>
        <begin position="448"/>
        <end position="450"/>
    </location>
</feature>
<feature type="short sequence motif" description="KID motif; interaction with HSPA8" evidence="1">
    <location>
        <begin position="644"/>
        <end position="646"/>
    </location>
</feature>
<feature type="site" description="Cleavage" evidence="1">
    <location>
        <begin position="231"/>
        <end position="232"/>
    </location>
</feature>
<feature type="site" description="Cleavage" evidence="1">
    <location>
        <begin position="241"/>
        <end position="242"/>
    </location>
</feature>
<feature type="site" description="Cleavage; associated with enhancement of infectivity" evidence="1">
    <location>
        <begin position="247"/>
        <end position="248"/>
    </location>
</feature>
<feature type="disulfide bond" evidence="1">
    <location>
        <begin position="203"/>
        <end position="216"/>
    </location>
</feature>
<feature type="disulfide bond" evidence="1">
    <location>
        <begin position="318"/>
        <end position="380"/>
    </location>
</feature>
<reference key="1">
    <citation type="journal article" date="1994" name="Virology">
        <title>Species specificity and interspecies relatedness in VP4 genotypes demonstrated by VP4 sequence analysis of equine, feline, and canine rotavirus strains.</title>
        <authorList>
            <person name="Taniguchi K."/>
            <person name="Urasawa T."/>
            <person name="Urasawa S."/>
        </authorList>
    </citation>
    <scope>NUCLEOTIDE SEQUENCE [MRNA]</scope>
</reference>
<reference key="2">
    <citation type="journal article" date="2002" name="J. Virol.">
        <title>Initial interaction of rotavirus strains with N-acetylneuraminic (sialic) acid residues on the cell surface correlates with VP4 genotype, not species of origin.</title>
        <authorList>
            <person name="Ciarlet M."/>
            <person name="Ludert J.E."/>
            <person name="Iturriza-Gomara M."/>
            <person name="Liprandi F."/>
            <person name="Gray J.J."/>
            <person name="Desselberger U."/>
            <person name="Estes M.K."/>
        </authorList>
    </citation>
    <scope>SIALIC ACID INDEPENDENCY</scope>
</reference>
<reference key="3">
    <citation type="journal article" date="2006" name="Glycoconj. J.">
        <title>Role of sialic acids in rotavirus infection.</title>
        <authorList>
            <person name="Isa P."/>
            <person name="Arias C.F."/>
            <person name="Lopez S."/>
        </authorList>
    </citation>
    <scope>REVIEW</scope>
</reference>
<keyword id="KW-0167">Capsid protein</keyword>
<keyword id="KW-0175">Coiled coil</keyword>
<keyword id="KW-1015">Disulfide bond</keyword>
<keyword id="KW-0348">Hemagglutinin</keyword>
<keyword id="KW-1032">Host cell membrane</keyword>
<keyword id="KW-1035">Host cytoplasm</keyword>
<keyword id="KW-1037">Host cytoskeleton</keyword>
<keyword id="KW-1038">Host endoplasmic reticulum</keyword>
<keyword id="KW-1043">Host membrane</keyword>
<keyword id="KW-0945">Host-virus interaction</keyword>
<keyword id="KW-0472">Membrane</keyword>
<keyword id="KW-1152">Outer capsid protein</keyword>
<keyword id="KW-1161">Viral attachment to host cell</keyword>
<keyword id="KW-1162">Viral penetration into host cytoplasm</keyword>
<keyword id="KW-1173">Viral penetration via permeabilization of host membrane</keyword>
<keyword id="KW-0946">Virion</keyword>
<keyword id="KW-1160">Virus entry into host cell</keyword>
<organism>
    <name type="scientific">Rotavirus A (strain RVA/Equine/United States/FI-14/1980/G3P4[12])</name>
    <name type="common">RV-A</name>
    <name type="synonym">Rotavirus A (strain FI14)</name>
    <dbReference type="NCBI Taxonomy" id="36442"/>
    <lineage>
        <taxon>Viruses</taxon>
        <taxon>Riboviria</taxon>
        <taxon>Orthornavirae</taxon>
        <taxon>Duplornaviricota</taxon>
        <taxon>Resentoviricetes</taxon>
        <taxon>Reovirales</taxon>
        <taxon>Sedoreoviridae</taxon>
        <taxon>Rotavirus</taxon>
        <taxon>Equine rotavirus</taxon>
    </lineage>
</organism>
<comment type="function">
    <molecule>Outer capsid protein VP4</molecule>
    <text evidence="1">Spike-forming protein that mediates virion attachment to the host epithelial cell receptors and plays a major role in cell penetration, determination of host range restriction and virulence. Rotavirus attachment and entry into the host cell probably involves multiple sequential contacts between the outer capsid proteins VP4 and VP7, and the cell receptors. It is subsequently lost, together with VP7, following virus entry into the host cell. Following entry into the host cell, low intracellular or intravesicular Ca(2+) concentration probably causes the calcium-stabilized VP7 trimers to dissociate from the virion. This step is probably necessary for the membrane-disrupting entry step and the release of VP4, which is locked onto the virion by VP7. During the virus exit from the host cell, VP4 seems to be required to target the newly formed virions to the host cell lipid rafts.</text>
</comment>
<comment type="function">
    <molecule>Outer capsid protein VP5*</molecule>
    <text evidence="1">Forms the spike 'foot' and 'body' and acts as a membrane permeabilization protein that mediates release of viral particles from endosomal compartments into the cytoplasm. During entry, the part of VP5* that protrudes from the virus folds back on itself and reorganizes from a local dimer to a trimer. This reorganization may be linked to membrane penetration by exposing VP5* hydrophobic region. In integrin-dependent strains, VP5* targets the integrin heterodimer ITGA2/ITGB1 for cell attachment.</text>
</comment>
<comment type="function">
    <molecule>Outer capsid protein VP8*</molecule>
    <text evidence="1">Forms the head of the spikes and mediates the recognition of specific host cell surface glycans. It is the viral hemagglutinin and an important target of neutralizing antibodies. In sialic acid-dependent strains, VP8* binds to host cell sialic acid, most probably a ganglioside, providing the initial contact. In some other strains, VP8* mediates the attachment to histo-blood group antigens (HBGAs) for viral entry.</text>
</comment>
<comment type="subunit">
    <molecule>Outer capsid protein VP4</molecule>
    <text evidence="1">Homotrimer. VP4 adopts a dimeric appearance above the capsid surface, while forming a trimeric base anchored inside the capsid layer. Only hints of the third molecule are observed above the capsid surface. It probably performs a series of molecular rearrangements during viral entry. Prior to trypsin cleavage, it is flexible. The priming trypsin cleavage triggers its rearrangement into rigid spikes with approximate two-fold symmetry of their protruding parts. After an unknown second triggering event, cleaved VP4 may undergo another rearrangement, in which two VP5* subunits fold back on themselves and join a third subunit to form a tightly associated trimer, shaped like a folded umbrella. Interacts with VP6. Interacts with VP7.</text>
</comment>
<comment type="subunit">
    <molecule>Outer capsid protein VP5*</molecule>
    <text evidence="1">Homotrimer. The trimer is coiled-coil stabilized by its C-terminus, however, its N-terminus, known as antigen domain or 'body', seems to be flexible allowing it to self-associate either as a dimer or a trimer.</text>
</comment>
<comment type="subcellular location">
    <molecule>Outer capsid protein VP4</molecule>
    <subcellularLocation>
        <location evidence="1">Virion</location>
    </subcellularLocation>
    <subcellularLocation>
        <location evidence="1">Host rough endoplasmic reticulum</location>
    </subcellularLocation>
    <subcellularLocation>
        <location evidence="1">Host cell membrane</location>
    </subcellularLocation>
    <subcellularLocation>
        <location evidence="1">Host cytoplasm</location>
        <location evidence="1">Host cytoskeleton</location>
    </subcellularLocation>
    <subcellularLocation>
        <location evidence="1">Host endoplasmic reticulum-Golgi intermediate compartment</location>
    </subcellularLocation>
    <text evidence="1">The outer layer contains 180 copies of VP4, grouped as 60 dimers. Immature double-layered particles assembled in the cytoplasm bud across the membrane of the endoplasmic reticulum, acquiring during this process a transient lipid membrane that is modified with the ER resident viral glycoproteins NSP4 and VP7; these enveloped particles also contain VP4. As the particles move towards the interior of the ER cisternae, the transient lipid membrane and the non-structural protein NSP4 are lost, while the virus surface proteins VP4 and VP7 rearrange to form the outermost virus protein layer, yielding mature infectious triple-layered particles. VP4 also seems to associate with lipid rafts of the host cell membrane probably for the exit of the virus from the infected cell by an alternate pathway.</text>
</comment>
<comment type="subcellular location">
    <molecule>Outer capsid protein VP8*</molecule>
    <subcellularLocation>
        <location evidence="1">Virion</location>
    </subcellularLocation>
    <text evidence="1">Outer capsid protein.</text>
</comment>
<comment type="subcellular location">
    <molecule>Outer capsid protein VP5*</molecule>
    <subcellularLocation>
        <location evidence="1">Virion</location>
    </subcellularLocation>
    <text evidence="1">Outer capsid protein.</text>
</comment>
<comment type="domain">
    <molecule>Outer capsid protein VP4</molecule>
    <text evidence="1">The VP4 spike is divided into a foot, a stalk and body, and a head.</text>
</comment>
<comment type="PTM">
    <molecule>Outer capsid protein VP4</molecule>
    <text evidence="1">Proteolytic cleavage by trypsin results in activation of VP4 functions and greatly increases infectivity. The penetration into the host cell is dependent on trypsin treatment of VP4. It produces two peptides, VP5* and VP8* that remain associated with the virion. Cleavage of VP4 by trypsin probably occurs in vivo in the lumen of the intestine prior to infection of enterocytes. Trypsin seems to be incorporated into the three-layered viral particles but remains inactive as long as the viral outer capsid is intact and would only be activated upon the solubilization of the latter.</text>
</comment>
<comment type="miscellaneous">
    <text evidence="2 3">This strain probably does not use sialic acid to attach to the host cell.</text>
</comment>
<comment type="miscellaneous">
    <text evidence="1">In group A rotaviruses, VP4 defines the P serotype.</text>
</comment>
<comment type="miscellaneous">
    <text evidence="1">Some rotavirus strains are neuraminidase-sensitive and require sialic acid to attach to the cell surface. Some rotavirus strains are integrin-dependent. Some rotavirus strains depend on ganglioside for their entry into the host cell. Hsp70 also seems to be involved in the entry of some strains.</text>
</comment>
<comment type="similarity">
    <text evidence="1">Belongs to the rotavirus VP4 family.</text>
</comment>
<dbReference type="EMBL" id="D13398">
    <property type="protein sequence ID" value="BAA02662.1"/>
    <property type="molecule type" value="mRNA"/>
</dbReference>
<dbReference type="SMR" id="Q98635"/>
<dbReference type="GO" id="GO:0044172">
    <property type="term" value="C:host cell endoplasmic reticulum-Golgi intermediate compartment"/>
    <property type="evidence" value="ECO:0007669"/>
    <property type="project" value="UniProtKB-SubCell"/>
</dbReference>
<dbReference type="GO" id="GO:0020002">
    <property type="term" value="C:host cell plasma membrane"/>
    <property type="evidence" value="ECO:0007669"/>
    <property type="project" value="UniProtKB-SubCell"/>
</dbReference>
<dbReference type="GO" id="GO:0044168">
    <property type="term" value="C:host cell rough endoplasmic reticulum"/>
    <property type="evidence" value="ECO:0007669"/>
    <property type="project" value="UniProtKB-SubCell"/>
</dbReference>
<dbReference type="GO" id="GO:0044163">
    <property type="term" value="C:host cytoskeleton"/>
    <property type="evidence" value="ECO:0007669"/>
    <property type="project" value="UniProtKB-SubCell"/>
</dbReference>
<dbReference type="GO" id="GO:0016020">
    <property type="term" value="C:membrane"/>
    <property type="evidence" value="ECO:0007669"/>
    <property type="project" value="UniProtKB-KW"/>
</dbReference>
<dbReference type="GO" id="GO:0039624">
    <property type="term" value="C:viral outer capsid"/>
    <property type="evidence" value="ECO:0007669"/>
    <property type="project" value="UniProtKB-UniRule"/>
</dbReference>
<dbReference type="GO" id="GO:0039665">
    <property type="term" value="P:permeabilization of host organelle membrane involved in viral entry into host cell"/>
    <property type="evidence" value="ECO:0007669"/>
    <property type="project" value="UniProtKB-UniRule"/>
</dbReference>
<dbReference type="GO" id="GO:0019062">
    <property type="term" value="P:virion attachment to host cell"/>
    <property type="evidence" value="ECO:0007669"/>
    <property type="project" value="UniProtKB-UniRule"/>
</dbReference>
<dbReference type="Gene3D" id="1.20.5.170">
    <property type="match status" value="1"/>
</dbReference>
<dbReference type="Gene3D" id="2.60.120.200">
    <property type="match status" value="1"/>
</dbReference>
<dbReference type="HAMAP" id="MF_04132">
    <property type="entry name" value="Rota_A_VP4"/>
    <property type="match status" value="1"/>
</dbReference>
<dbReference type="HAMAP" id="MF_04125">
    <property type="entry name" value="Rota_VP4"/>
    <property type="match status" value="1"/>
</dbReference>
<dbReference type="InterPro" id="IPR013320">
    <property type="entry name" value="ConA-like_dom_sf"/>
</dbReference>
<dbReference type="InterPro" id="IPR042546">
    <property type="entry name" value="Rota_A_VP4"/>
</dbReference>
<dbReference type="InterPro" id="IPR035330">
    <property type="entry name" value="Rota_VP4_MID"/>
</dbReference>
<dbReference type="InterPro" id="IPR038017">
    <property type="entry name" value="Rota_VP4_MID_sf"/>
</dbReference>
<dbReference type="InterPro" id="IPR000416">
    <property type="entry name" value="VP4_concanavalin-like"/>
</dbReference>
<dbReference type="InterPro" id="IPR035329">
    <property type="entry name" value="VP4_helical"/>
</dbReference>
<dbReference type="Pfam" id="PF17477">
    <property type="entry name" value="Rota_VP4_MID"/>
    <property type="match status" value="1"/>
</dbReference>
<dbReference type="Pfam" id="PF00426">
    <property type="entry name" value="VP4_haemagglut"/>
    <property type="match status" value="1"/>
</dbReference>
<dbReference type="Pfam" id="PF17478">
    <property type="entry name" value="VP4_helical"/>
    <property type="match status" value="1"/>
</dbReference>
<dbReference type="SUPFAM" id="SSF49899">
    <property type="entry name" value="Concanavalin A-like lectins/glucanases"/>
    <property type="match status" value="1"/>
</dbReference>
<dbReference type="SUPFAM" id="SSF111379">
    <property type="entry name" value="VP4 membrane interaction domain"/>
    <property type="match status" value="1"/>
</dbReference>
<organismHost>
    <name type="scientific">Equus caballus</name>
    <name type="common">Horse</name>
    <dbReference type="NCBI Taxonomy" id="9796"/>
</organismHost>
<accession>Q98635</accession>
<accession>Q86177</accession>
<protein>
    <recommendedName>
        <fullName evidence="1">Outer capsid protein VP4</fullName>
    </recommendedName>
    <alternativeName>
        <fullName evidence="1">Hemagglutinin</fullName>
    </alternativeName>
    <component>
        <recommendedName>
            <fullName evidence="1">Outer capsid protein VP8*</fullName>
        </recommendedName>
    </component>
    <component>
        <recommendedName>
            <fullName evidence="1">Outer capsid protein VP5*</fullName>
        </recommendedName>
    </component>
</protein>
<name>VP4_ROTE1</name>
<sequence length="776" mass="86806">MASLIYRQLLANSYTVDLSDEIENIGYAKSKNVTINPGPFAQTGYAPVNWGPGEVNDSTTVEPVLDGPYQPTNFNPPVNYWMLLSPLNAGVVVEGTNSIDRWLATVLVEPNVTTTVRTYTLFGVQEQISVENNSTTKWKFINLIKTTPPGNFTLYSTLLSEPKLHGIMKHGGQLWVYNGETQTLLLQDYVTSNYDSLTMTSFCDFYIIPRNQESTCTEYINNGLPPIQNTRNVVSVSISSRNIIHNRAQVNEDIVISKTSLWKGVQYNRDIINRFRFANAIIKSGGLGYKWSEISFKPANYQYTYTRDGEEITAHTTCSVNGVNDFSFNGGSLPTDFVISRYEVIKENSYVYVDYWDDSQAFRNMVYVRSLAANLNDVLCTGGDYSFALPVGQWPVMTGGAVMLHAAGVTLSTQFTDFVSLNSLRFRFSLSVEEPYFSITRTRVTRLYGLPAVNPNNDRDYYEIAGRFSLISLVPSNDDYQTPIMNSVTVRQDLERQLGELREEFNALSQEIAISQLIDLALLPLDMFSMFSGIQSSIDAAKSMATNVMKKFKKSKLASSVSTLTNSLSDAASSVSRSSSIRSVSSSVSAWTDVSNQFTDISNSVNSISTQTSTISRRLRLKEIATQTEGINFDDISAAVLKTKIDKSTQIAANNIPDVITEASEKFIPNRAYRVISNDNVFEASTDGRFFAYKVGTFEEIPFDVQKLADLVTDSPVISAIIDFKTLKNLNDNYGITREQAFNLLRSDPRVLREFINQDNPIIKNRIEQLILQCRL</sequence>